<dbReference type="EC" id="2.7.7.-" evidence="1"/>
<dbReference type="EC" id="2.7.7.108" evidence="1"/>
<dbReference type="EMBL" id="CP000103">
    <property type="protein sequence ID" value="ABB74813.1"/>
    <property type="molecule type" value="Genomic_DNA"/>
</dbReference>
<dbReference type="RefSeq" id="WP_011380844.1">
    <property type="nucleotide sequence ID" value="NZ_FNVK01000024.1"/>
</dbReference>
<dbReference type="SMR" id="Q2Y8V8"/>
<dbReference type="STRING" id="323848.Nmul_A1510"/>
<dbReference type="KEGG" id="nmu:Nmul_A1510"/>
<dbReference type="eggNOG" id="COG0397">
    <property type="taxonomic scope" value="Bacteria"/>
</dbReference>
<dbReference type="HOGENOM" id="CLU_010245_4_0_4"/>
<dbReference type="Proteomes" id="UP000002718">
    <property type="component" value="Chromosome"/>
</dbReference>
<dbReference type="GO" id="GO:0070733">
    <property type="term" value="F:AMPylase activity"/>
    <property type="evidence" value="ECO:0007669"/>
    <property type="project" value="RHEA"/>
</dbReference>
<dbReference type="GO" id="GO:0005524">
    <property type="term" value="F:ATP binding"/>
    <property type="evidence" value="ECO:0007669"/>
    <property type="project" value="UniProtKB-UniRule"/>
</dbReference>
<dbReference type="GO" id="GO:0000287">
    <property type="term" value="F:magnesium ion binding"/>
    <property type="evidence" value="ECO:0007669"/>
    <property type="project" value="UniProtKB-UniRule"/>
</dbReference>
<dbReference type="HAMAP" id="MF_00692">
    <property type="entry name" value="YdiU_SelO"/>
    <property type="match status" value="1"/>
</dbReference>
<dbReference type="InterPro" id="IPR003846">
    <property type="entry name" value="SelO"/>
</dbReference>
<dbReference type="NCBIfam" id="NF000658">
    <property type="entry name" value="PRK00029.1"/>
    <property type="match status" value="1"/>
</dbReference>
<dbReference type="PANTHER" id="PTHR32057">
    <property type="entry name" value="PROTEIN ADENYLYLTRANSFERASE SELO, MITOCHONDRIAL"/>
    <property type="match status" value="1"/>
</dbReference>
<dbReference type="PANTHER" id="PTHR32057:SF14">
    <property type="entry name" value="PROTEIN ADENYLYLTRANSFERASE SELO, MITOCHONDRIAL"/>
    <property type="match status" value="1"/>
</dbReference>
<dbReference type="Pfam" id="PF02696">
    <property type="entry name" value="SelO"/>
    <property type="match status" value="1"/>
</dbReference>
<name>SELO_NITMU</name>
<organism>
    <name type="scientific">Nitrosospira multiformis (strain ATCC 25196 / NCIMB 11849 / C 71)</name>
    <dbReference type="NCBI Taxonomy" id="323848"/>
    <lineage>
        <taxon>Bacteria</taxon>
        <taxon>Pseudomonadati</taxon>
        <taxon>Pseudomonadota</taxon>
        <taxon>Betaproteobacteria</taxon>
        <taxon>Nitrosomonadales</taxon>
        <taxon>Nitrosomonadaceae</taxon>
        <taxon>Nitrosospira</taxon>
    </lineage>
</organism>
<gene>
    <name evidence="1" type="primary">ydiU</name>
    <name evidence="1" type="synonym">selO</name>
    <name type="ordered locus">Nmul_A1510</name>
</gene>
<evidence type="ECO:0000255" key="1">
    <source>
        <dbReference type="HAMAP-Rule" id="MF_00692"/>
    </source>
</evidence>
<feature type="chain" id="PRO_0000271839" description="Protein nucleotidyltransferase YdiU">
    <location>
        <begin position="1"/>
        <end position="565"/>
    </location>
</feature>
<feature type="active site" description="Proton acceptor" evidence="1">
    <location>
        <position position="290"/>
    </location>
</feature>
<feature type="binding site" evidence="1">
    <location>
        <position position="118"/>
    </location>
    <ligand>
        <name>ATP</name>
        <dbReference type="ChEBI" id="CHEBI:30616"/>
    </ligand>
</feature>
<feature type="binding site" evidence="1">
    <location>
        <position position="120"/>
    </location>
    <ligand>
        <name>ATP</name>
        <dbReference type="ChEBI" id="CHEBI:30616"/>
    </ligand>
</feature>
<feature type="binding site" evidence="1">
    <location>
        <position position="121"/>
    </location>
    <ligand>
        <name>ATP</name>
        <dbReference type="ChEBI" id="CHEBI:30616"/>
    </ligand>
</feature>
<feature type="binding site" evidence="1">
    <location>
        <position position="141"/>
    </location>
    <ligand>
        <name>ATP</name>
        <dbReference type="ChEBI" id="CHEBI:30616"/>
    </ligand>
</feature>
<feature type="binding site" evidence="1">
    <location>
        <position position="153"/>
    </location>
    <ligand>
        <name>ATP</name>
        <dbReference type="ChEBI" id="CHEBI:30616"/>
    </ligand>
</feature>
<feature type="binding site" evidence="1">
    <location>
        <position position="154"/>
    </location>
    <ligand>
        <name>ATP</name>
        <dbReference type="ChEBI" id="CHEBI:30616"/>
    </ligand>
</feature>
<feature type="binding site" evidence="1">
    <location>
        <position position="211"/>
    </location>
    <ligand>
        <name>ATP</name>
        <dbReference type="ChEBI" id="CHEBI:30616"/>
    </ligand>
</feature>
<feature type="binding site" evidence="1">
    <location>
        <position position="218"/>
    </location>
    <ligand>
        <name>ATP</name>
        <dbReference type="ChEBI" id="CHEBI:30616"/>
    </ligand>
</feature>
<feature type="binding site" evidence="1">
    <location>
        <position position="291"/>
    </location>
    <ligand>
        <name>Mg(2+)</name>
        <dbReference type="ChEBI" id="CHEBI:18420"/>
    </ligand>
</feature>
<feature type="binding site" evidence="1">
    <location>
        <position position="300"/>
    </location>
    <ligand>
        <name>ATP</name>
        <dbReference type="ChEBI" id="CHEBI:30616"/>
    </ligand>
</feature>
<feature type="binding site" evidence="1">
    <location>
        <position position="300"/>
    </location>
    <ligand>
        <name>Mg(2+)</name>
        <dbReference type="ChEBI" id="CHEBI:18420"/>
    </ligand>
</feature>
<accession>Q2Y8V8</accession>
<sequence length="565" mass="63264">MSQSNLQRSMPIVTLPDLFDARFDNRFVRQLPGDPETRNVPRQVRNAGYTQVSPTPVRSPRLLAWADEVGEMLGIARPASPVSPAVEVLAGNRILPSMQPYAARYGGHQFGHWAGQLGDGRAITLGELISPNDKRYELQLKGAGKTPYSRTADGRAVLRSSVREFLCSEAMHSLGVPTTRALSLVATGEAVIRDMFYDGHPGAEPGAIVCRVSPSFLRFGNFEILAAQKEPELLRQLADFVIGEHFPELASSHRPPEVYAKWFEEVCRRTGILVAHWMRVGFVHGVMNTDNMSILGLTIDYGPYGWLEGFDLHWTPNTTDAQGRRYCYGNQPKIAQWNLTRLAGALTPLIEDDAALEHGLAVFGETFNNTWSGMLAAKLGLASLEHSDDDSLLSDLFETLQQVETDMTLFFRCLMNIPLNPISGNRATTFPAPENLESVDQMNDHGLVELFRPAFYDAHQAFSHAHLTRLAGWLRRYIARVRQEGEPEGLRYHRMSRANPKYVLRNYLAQQAIEALERGDDSVIIRLMEMLKHPYDEQPEHEDLAARRPEWARNKPGCSALSCSS</sequence>
<reference key="1">
    <citation type="submission" date="2005-08" db="EMBL/GenBank/DDBJ databases">
        <title>Complete sequence of chromosome 1 of Nitrosospira multiformis ATCC 25196.</title>
        <authorList>
            <person name="Copeland A."/>
            <person name="Lucas S."/>
            <person name="Lapidus A."/>
            <person name="Barry K."/>
            <person name="Detter J.C."/>
            <person name="Glavina T."/>
            <person name="Hammon N."/>
            <person name="Israni S."/>
            <person name="Pitluck S."/>
            <person name="Chain P."/>
            <person name="Malfatti S."/>
            <person name="Shin M."/>
            <person name="Vergez L."/>
            <person name="Schmutz J."/>
            <person name="Larimer F."/>
            <person name="Land M."/>
            <person name="Hauser L."/>
            <person name="Kyrpides N."/>
            <person name="Lykidis A."/>
            <person name="Richardson P."/>
        </authorList>
    </citation>
    <scope>NUCLEOTIDE SEQUENCE [LARGE SCALE GENOMIC DNA]</scope>
    <source>
        <strain>ATCC 25196 / NCIMB 11849 / C 71</strain>
    </source>
</reference>
<protein>
    <recommendedName>
        <fullName evidence="1">Protein nucleotidyltransferase YdiU</fullName>
        <ecNumber evidence="1">2.7.7.-</ecNumber>
    </recommendedName>
    <alternativeName>
        <fullName evidence="1">Protein adenylyltransferase YdiU</fullName>
        <ecNumber evidence="1">2.7.7.108</ecNumber>
    </alternativeName>
    <alternativeName>
        <fullName evidence="1">Protein uridylyltransferase YdiU</fullName>
        <ecNumber evidence="1">2.7.7.-</ecNumber>
    </alternativeName>
</protein>
<proteinExistence type="inferred from homology"/>
<keyword id="KW-0067">ATP-binding</keyword>
<keyword id="KW-0460">Magnesium</keyword>
<keyword id="KW-0464">Manganese</keyword>
<keyword id="KW-0479">Metal-binding</keyword>
<keyword id="KW-0547">Nucleotide-binding</keyword>
<keyword id="KW-0548">Nucleotidyltransferase</keyword>
<keyword id="KW-1185">Reference proteome</keyword>
<keyword id="KW-0808">Transferase</keyword>
<comment type="function">
    <text evidence="1">Nucleotidyltransferase involved in the post-translational modification of proteins. It can catalyze the addition of adenosine monophosphate (AMP) or uridine monophosphate (UMP) to a protein, resulting in modifications known as AMPylation and UMPylation.</text>
</comment>
<comment type="catalytic activity">
    <reaction evidence="1">
        <text>L-seryl-[protein] + ATP = 3-O-(5'-adenylyl)-L-seryl-[protein] + diphosphate</text>
        <dbReference type="Rhea" id="RHEA:58120"/>
        <dbReference type="Rhea" id="RHEA-COMP:9863"/>
        <dbReference type="Rhea" id="RHEA-COMP:15073"/>
        <dbReference type="ChEBI" id="CHEBI:29999"/>
        <dbReference type="ChEBI" id="CHEBI:30616"/>
        <dbReference type="ChEBI" id="CHEBI:33019"/>
        <dbReference type="ChEBI" id="CHEBI:142516"/>
        <dbReference type="EC" id="2.7.7.108"/>
    </reaction>
</comment>
<comment type="catalytic activity">
    <reaction evidence="1">
        <text>L-threonyl-[protein] + ATP = 3-O-(5'-adenylyl)-L-threonyl-[protein] + diphosphate</text>
        <dbReference type="Rhea" id="RHEA:54292"/>
        <dbReference type="Rhea" id="RHEA-COMP:11060"/>
        <dbReference type="Rhea" id="RHEA-COMP:13847"/>
        <dbReference type="ChEBI" id="CHEBI:30013"/>
        <dbReference type="ChEBI" id="CHEBI:30616"/>
        <dbReference type="ChEBI" id="CHEBI:33019"/>
        <dbReference type="ChEBI" id="CHEBI:138113"/>
        <dbReference type="EC" id="2.7.7.108"/>
    </reaction>
</comment>
<comment type="catalytic activity">
    <reaction evidence="1">
        <text>L-tyrosyl-[protein] + ATP = O-(5'-adenylyl)-L-tyrosyl-[protein] + diphosphate</text>
        <dbReference type="Rhea" id="RHEA:54288"/>
        <dbReference type="Rhea" id="RHEA-COMP:10136"/>
        <dbReference type="Rhea" id="RHEA-COMP:13846"/>
        <dbReference type="ChEBI" id="CHEBI:30616"/>
        <dbReference type="ChEBI" id="CHEBI:33019"/>
        <dbReference type="ChEBI" id="CHEBI:46858"/>
        <dbReference type="ChEBI" id="CHEBI:83624"/>
        <dbReference type="EC" id="2.7.7.108"/>
    </reaction>
</comment>
<comment type="catalytic activity">
    <reaction evidence="1">
        <text>L-histidyl-[protein] + UTP = N(tele)-(5'-uridylyl)-L-histidyl-[protein] + diphosphate</text>
        <dbReference type="Rhea" id="RHEA:83891"/>
        <dbReference type="Rhea" id="RHEA-COMP:9745"/>
        <dbReference type="Rhea" id="RHEA-COMP:20239"/>
        <dbReference type="ChEBI" id="CHEBI:29979"/>
        <dbReference type="ChEBI" id="CHEBI:33019"/>
        <dbReference type="ChEBI" id="CHEBI:46398"/>
        <dbReference type="ChEBI" id="CHEBI:233474"/>
    </reaction>
</comment>
<comment type="catalytic activity">
    <reaction evidence="1">
        <text>L-seryl-[protein] + UTP = O-(5'-uridylyl)-L-seryl-[protein] + diphosphate</text>
        <dbReference type="Rhea" id="RHEA:64604"/>
        <dbReference type="Rhea" id="RHEA-COMP:9863"/>
        <dbReference type="Rhea" id="RHEA-COMP:16635"/>
        <dbReference type="ChEBI" id="CHEBI:29999"/>
        <dbReference type="ChEBI" id="CHEBI:33019"/>
        <dbReference type="ChEBI" id="CHEBI:46398"/>
        <dbReference type="ChEBI" id="CHEBI:156051"/>
    </reaction>
</comment>
<comment type="catalytic activity">
    <reaction evidence="1">
        <text>L-tyrosyl-[protein] + UTP = O-(5'-uridylyl)-L-tyrosyl-[protein] + diphosphate</text>
        <dbReference type="Rhea" id="RHEA:83887"/>
        <dbReference type="Rhea" id="RHEA-COMP:10136"/>
        <dbReference type="Rhea" id="RHEA-COMP:20238"/>
        <dbReference type="ChEBI" id="CHEBI:33019"/>
        <dbReference type="ChEBI" id="CHEBI:46398"/>
        <dbReference type="ChEBI" id="CHEBI:46858"/>
        <dbReference type="ChEBI" id="CHEBI:90602"/>
    </reaction>
</comment>
<comment type="cofactor">
    <cofactor evidence="1">
        <name>Mg(2+)</name>
        <dbReference type="ChEBI" id="CHEBI:18420"/>
    </cofactor>
    <cofactor evidence="1">
        <name>Mn(2+)</name>
        <dbReference type="ChEBI" id="CHEBI:29035"/>
    </cofactor>
</comment>
<comment type="similarity">
    <text evidence="1">Belongs to the SELO family.</text>
</comment>